<gene>
    <name type="primary">GPA1</name>
    <name type="ORF">UMAG_10177</name>
</gene>
<evidence type="ECO:0000250" key="1"/>
<evidence type="ECO:0000250" key="2">
    <source>
        <dbReference type="UniProtKB" id="P08539"/>
    </source>
</evidence>
<evidence type="ECO:0000250" key="3">
    <source>
        <dbReference type="UniProtKB" id="P18064"/>
    </source>
</evidence>
<evidence type="ECO:0000255" key="4">
    <source>
        <dbReference type="PROSITE-ProRule" id="PRU01230"/>
    </source>
</evidence>
<evidence type="ECO:0000305" key="5"/>
<protein>
    <recommendedName>
        <fullName>Guanine nucleotide-binding protein alpha-1 subunit</fullName>
    </recommendedName>
</protein>
<proteinExistence type="inferred from homology"/>
<sequence>MGCGASKVDKEGQARNDAIDAQLKKDRLAQKNEIKMLLLGAGESGKSTILKQMKLINHGSYSAEERESYKEIIFSNTVQSMRVLLDAMERLDIPLADATNAPRAEIILGLSPSIESSVLPRQVADAIHALWGDAGVQACFGRSREYQLNDSAKYYFDSIQRMAEPSYLPTDQDVLRSRVKTTGITETHFKIGELNYKLFDVGGQRSERKKWIHCFENVTAIIFLVAISEYDQLLYEDENVNRMQEALTLFDSICNSRWFVKTSIILFLNKIDLFKQKLPISPMADYFSDYTGGADYNSASEYIVNRFVSLNQSDAKTIYTHFTCATDTSQIKFVMSAVNDIIIQVNLRDCGLL</sequence>
<name>GPA1_MYCMD</name>
<comment type="function">
    <text>Guanine nucleotide-binding proteins (G proteins) are involved as modulators or transducers in various transmembrane signaling systems.</text>
</comment>
<comment type="cofactor">
    <cofactor evidence="3">
        <name>Mg(2+)</name>
        <dbReference type="ChEBI" id="CHEBI:18420"/>
    </cofactor>
</comment>
<comment type="subunit">
    <text>G proteins are composed of 3 units; alpha, beta and gamma. The alpha chain contains the guanine nucleotide binding site.</text>
</comment>
<comment type="similarity">
    <text evidence="5">Belongs to the G-alpha family.</text>
</comment>
<dbReference type="EMBL" id="U85775">
    <property type="protein sequence ID" value="AAC49724.1"/>
    <property type="molecule type" value="Genomic_DNA"/>
</dbReference>
<dbReference type="EMBL" id="CM003143">
    <property type="protein sequence ID" value="KIS70049.1"/>
    <property type="molecule type" value="Genomic_DNA"/>
</dbReference>
<dbReference type="RefSeq" id="XP_011388340.1">
    <property type="nucleotide sequence ID" value="XM_011390038.1"/>
</dbReference>
<dbReference type="SMR" id="P87032"/>
<dbReference type="FunCoup" id="P87032">
    <property type="interactions" value="90"/>
</dbReference>
<dbReference type="STRING" id="237631.P87032"/>
<dbReference type="EnsemblFungi" id="KIS70049">
    <property type="protein sequence ID" value="KIS70049"/>
    <property type="gene ID" value="UMAG_10177"/>
</dbReference>
<dbReference type="GeneID" id="23566241"/>
<dbReference type="KEGG" id="uma:UMAG_10177"/>
<dbReference type="eggNOG" id="KOG0082">
    <property type="taxonomic scope" value="Eukaryota"/>
</dbReference>
<dbReference type="InParanoid" id="P87032"/>
<dbReference type="OrthoDB" id="5817230at2759"/>
<dbReference type="PHI-base" id="PHI:76"/>
<dbReference type="Proteomes" id="UP000000561">
    <property type="component" value="Chromosome 4"/>
</dbReference>
<dbReference type="GO" id="GO:0005737">
    <property type="term" value="C:cytoplasm"/>
    <property type="evidence" value="ECO:0000318"/>
    <property type="project" value="GO_Central"/>
</dbReference>
<dbReference type="GO" id="GO:0005834">
    <property type="term" value="C:heterotrimeric G-protein complex"/>
    <property type="evidence" value="ECO:0000318"/>
    <property type="project" value="GO_Central"/>
</dbReference>
<dbReference type="GO" id="GO:0001664">
    <property type="term" value="F:G protein-coupled receptor binding"/>
    <property type="evidence" value="ECO:0000318"/>
    <property type="project" value="GO_Central"/>
</dbReference>
<dbReference type="GO" id="GO:0031683">
    <property type="term" value="F:G-protein beta/gamma-subunit complex binding"/>
    <property type="evidence" value="ECO:0000318"/>
    <property type="project" value="GO_Central"/>
</dbReference>
<dbReference type="GO" id="GO:0005525">
    <property type="term" value="F:GTP binding"/>
    <property type="evidence" value="ECO:0007669"/>
    <property type="project" value="UniProtKB-KW"/>
</dbReference>
<dbReference type="GO" id="GO:0003924">
    <property type="term" value="F:GTPase activity"/>
    <property type="evidence" value="ECO:0000318"/>
    <property type="project" value="GO_Central"/>
</dbReference>
<dbReference type="GO" id="GO:0046872">
    <property type="term" value="F:metal ion binding"/>
    <property type="evidence" value="ECO:0007669"/>
    <property type="project" value="UniProtKB-KW"/>
</dbReference>
<dbReference type="GO" id="GO:0007186">
    <property type="term" value="P:G protein-coupled receptor signaling pathway"/>
    <property type="evidence" value="ECO:0007669"/>
    <property type="project" value="InterPro"/>
</dbReference>
<dbReference type="GO" id="GO:0000750">
    <property type="term" value="P:pheromone-dependent signal transduction involved in conjugation with cellular fusion"/>
    <property type="evidence" value="ECO:0000318"/>
    <property type="project" value="GO_Central"/>
</dbReference>
<dbReference type="CDD" id="cd00066">
    <property type="entry name" value="G-alpha"/>
    <property type="match status" value="1"/>
</dbReference>
<dbReference type="FunFam" id="3.40.50.300:FF:002307">
    <property type="entry name" value="Guanine nucleotide-binding protein G(k) subunit alpha"/>
    <property type="match status" value="1"/>
</dbReference>
<dbReference type="FunFam" id="1.10.400.10:FF:000002">
    <property type="entry name" value="guanine nucleotide-binding protein G(Q) subunit alpha"/>
    <property type="match status" value="1"/>
</dbReference>
<dbReference type="Gene3D" id="1.10.400.10">
    <property type="entry name" value="GI Alpha 1, domain 2-like"/>
    <property type="match status" value="1"/>
</dbReference>
<dbReference type="Gene3D" id="3.40.50.300">
    <property type="entry name" value="P-loop containing nucleotide triphosphate hydrolases"/>
    <property type="match status" value="1"/>
</dbReference>
<dbReference type="InterPro" id="IPR002975">
    <property type="entry name" value="Fungi_Gprotein_alpha"/>
</dbReference>
<dbReference type="InterPro" id="IPR001019">
    <property type="entry name" value="Gprotein_alpha_su"/>
</dbReference>
<dbReference type="InterPro" id="IPR011025">
    <property type="entry name" value="GproteinA_insert"/>
</dbReference>
<dbReference type="InterPro" id="IPR027417">
    <property type="entry name" value="P-loop_NTPase"/>
</dbReference>
<dbReference type="PANTHER" id="PTHR10218">
    <property type="entry name" value="GTP-BINDING PROTEIN ALPHA SUBUNIT"/>
    <property type="match status" value="1"/>
</dbReference>
<dbReference type="PANTHER" id="PTHR10218:SF302">
    <property type="entry name" value="GUANINE NUCLEOTIDE-BINDING PROTEIN ALPHA-5 SUBUNIT"/>
    <property type="match status" value="1"/>
</dbReference>
<dbReference type="Pfam" id="PF00503">
    <property type="entry name" value="G-alpha"/>
    <property type="match status" value="1"/>
</dbReference>
<dbReference type="PRINTS" id="PR00318">
    <property type="entry name" value="GPROTEINA"/>
</dbReference>
<dbReference type="PRINTS" id="PR01241">
    <property type="entry name" value="GPROTEINAFNG"/>
</dbReference>
<dbReference type="SMART" id="SM00275">
    <property type="entry name" value="G_alpha"/>
    <property type="match status" value="1"/>
</dbReference>
<dbReference type="SUPFAM" id="SSF52540">
    <property type="entry name" value="P-loop containing nucleoside triphosphate hydrolases"/>
    <property type="match status" value="1"/>
</dbReference>
<dbReference type="SUPFAM" id="SSF47895">
    <property type="entry name" value="Transducin (alpha subunit), insertion domain"/>
    <property type="match status" value="1"/>
</dbReference>
<dbReference type="PROSITE" id="PS51882">
    <property type="entry name" value="G_ALPHA"/>
    <property type="match status" value="1"/>
</dbReference>
<organism>
    <name type="scientific">Mycosarcoma maydis</name>
    <name type="common">Corn smut fungus</name>
    <name type="synonym">Ustilago maydis</name>
    <dbReference type="NCBI Taxonomy" id="5270"/>
    <lineage>
        <taxon>Eukaryota</taxon>
        <taxon>Fungi</taxon>
        <taxon>Dikarya</taxon>
        <taxon>Basidiomycota</taxon>
        <taxon>Ustilaginomycotina</taxon>
        <taxon>Ustilaginomycetes</taxon>
        <taxon>Ustilaginales</taxon>
        <taxon>Ustilaginaceae</taxon>
        <taxon>Mycosarcoma</taxon>
    </lineage>
</organism>
<accession>P87032</accession>
<accession>A0A0D1E1T9</accession>
<accession>Q4P440</accession>
<keyword id="KW-0342">GTP-binding</keyword>
<keyword id="KW-0378">Hydrolase</keyword>
<keyword id="KW-0449">Lipoprotein</keyword>
<keyword id="KW-0460">Magnesium</keyword>
<keyword id="KW-0479">Metal-binding</keyword>
<keyword id="KW-0519">Myristate</keyword>
<keyword id="KW-0547">Nucleotide-binding</keyword>
<keyword id="KW-0564">Palmitate</keyword>
<keyword id="KW-1185">Reference proteome</keyword>
<keyword id="KW-0807">Transducer</keyword>
<feature type="initiator methionine" description="Removed" evidence="1">
    <location>
        <position position="1"/>
    </location>
</feature>
<feature type="chain" id="PRO_0000203612" description="Guanine nucleotide-binding protein alpha-1 subunit">
    <location>
        <begin position="2"/>
        <end position="353"/>
    </location>
</feature>
<feature type="domain" description="G-alpha" evidence="4">
    <location>
        <begin position="32"/>
        <end position="353"/>
    </location>
</feature>
<feature type="region of interest" description="G1 motif" evidence="4">
    <location>
        <begin position="35"/>
        <end position="48"/>
    </location>
</feature>
<feature type="region of interest" description="G2 motif" evidence="4">
    <location>
        <begin position="173"/>
        <end position="181"/>
    </location>
</feature>
<feature type="region of interest" description="G3 motif" evidence="4">
    <location>
        <begin position="196"/>
        <end position="205"/>
    </location>
</feature>
<feature type="region of interest" description="G4 motif" evidence="4">
    <location>
        <begin position="265"/>
        <end position="272"/>
    </location>
</feature>
<feature type="region of interest" description="G5 motif" evidence="4">
    <location>
        <begin position="323"/>
        <end position="328"/>
    </location>
</feature>
<feature type="binding site" evidence="3">
    <location>
        <position position="43"/>
    </location>
    <ligand>
        <name>GTP</name>
        <dbReference type="ChEBI" id="CHEBI:37565"/>
    </ligand>
</feature>
<feature type="binding site" evidence="3">
    <location>
        <position position="44"/>
    </location>
    <ligand>
        <name>GTP</name>
        <dbReference type="ChEBI" id="CHEBI:37565"/>
    </ligand>
</feature>
<feature type="binding site" evidence="3">
    <location>
        <position position="45"/>
    </location>
    <ligand>
        <name>GTP</name>
        <dbReference type="ChEBI" id="CHEBI:37565"/>
    </ligand>
</feature>
<feature type="binding site" evidence="3">
    <location>
        <position position="46"/>
    </location>
    <ligand>
        <name>GTP</name>
        <dbReference type="ChEBI" id="CHEBI:37565"/>
    </ligand>
</feature>
<feature type="binding site" evidence="3">
    <location>
        <position position="47"/>
    </location>
    <ligand>
        <name>GTP</name>
        <dbReference type="ChEBI" id="CHEBI:37565"/>
    </ligand>
</feature>
<feature type="binding site" evidence="3">
    <location>
        <position position="47"/>
    </location>
    <ligand>
        <name>Mg(2+)</name>
        <dbReference type="ChEBI" id="CHEBI:18420"/>
    </ligand>
</feature>
<feature type="binding site" evidence="3">
    <location>
        <position position="48"/>
    </location>
    <ligand>
        <name>GTP</name>
        <dbReference type="ChEBI" id="CHEBI:37565"/>
    </ligand>
</feature>
<feature type="binding site" evidence="3">
    <location>
        <position position="150"/>
    </location>
    <ligand>
        <name>GTP</name>
        <dbReference type="ChEBI" id="CHEBI:37565"/>
    </ligand>
</feature>
<feature type="binding site" evidence="3">
    <location>
        <position position="175"/>
    </location>
    <ligand>
        <name>GTP</name>
        <dbReference type="ChEBI" id="CHEBI:37565"/>
    </ligand>
</feature>
<feature type="binding site" evidence="3">
    <location>
        <position position="181"/>
    </location>
    <ligand>
        <name>GTP</name>
        <dbReference type="ChEBI" id="CHEBI:37565"/>
    </ligand>
</feature>
<feature type="binding site" evidence="3">
    <location>
        <position position="181"/>
    </location>
    <ligand>
        <name>Mg(2+)</name>
        <dbReference type="ChEBI" id="CHEBI:18420"/>
    </ligand>
</feature>
<feature type="binding site" evidence="3">
    <location>
        <position position="203"/>
    </location>
    <ligand>
        <name>GTP</name>
        <dbReference type="ChEBI" id="CHEBI:37565"/>
    </ligand>
</feature>
<feature type="binding site" evidence="3">
    <location>
        <position position="269"/>
    </location>
    <ligand>
        <name>GTP</name>
        <dbReference type="ChEBI" id="CHEBI:37565"/>
    </ligand>
</feature>
<feature type="binding site" evidence="3">
    <location>
        <position position="270"/>
    </location>
    <ligand>
        <name>GTP</name>
        <dbReference type="ChEBI" id="CHEBI:37565"/>
    </ligand>
</feature>
<feature type="binding site" evidence="3">
    <location>
        <position position="272"/>
    </location>
    <ligand>
        <name>GTP</name>
        <dbReference type="ChEBI" id="CHEBI:37565"/>
    </ligand>
</feature>
<feature type="binding site" evidence="3">
    <location>
        <position position="325"/>
    </location>
    <ligand>
        <name>GTP</name>
        <dbReference type="ChEBI" id="CHEBI:37565"/>
    </ligand>
</feature>
<feature type="lipid moiety-binding region" description="N-myristoyl glycine" evidence="2">
    <location>
        <position position="2"/>
    </location>
</feature>
<feature type="lipid moiety-binding region" description="S-palmitoyl cysteine" evidence="2">
    <location>
        <position position="3"/>
    </location>
</feature>
<reference key="1">
    <citation type="journal article" date="1997" name="EMBO J.">
        <title>G proteins in Ustilago maydis: transmission of multiple signals?</title>
        <authorList>
            <person name="Regenfelder E."/>
            <person name="Spellig T."/>
            <person name="Hartmann A."/>
            <person name="Lauenstein S."/>
            <person name="Boelker M."/>
            <person name="Kahmann R."/>
        </authorList>
    </citation>
    <scope>NUCLEOTIDE SEQUENCE [GENOMIC DNA]</scope>
    <source>
        <strain>FB1</strain>
    </source>
</reference>
<reference key="2">
    <citation type="journal article" date="2006" name="Nature">
        <title>Insights from the genome of the biotrophic fungal plant pathogen Ustilago maydis.</title>
        <authorList>
            <person name="Kaemper J."/>
            <person name="Kahmann R."/>
            <person name="Boelker M."/>
            <person name="Ma L.-J."/>
            <person name="Brefort T."/>
            <person name="Saville B.J."/>
            <person name="Banuett F."/>
            <person name="Kronstad J.W."/>
            <person name="Gold S.E."/>
            <person name="Mueller O."/>
            <person name="Perlin M.H."/>
            <person name="Woesten H.A.B."/>
            <person name="de Vries R."/>
            <person name="Ruiz-Herrera J."/>
            <person name="Reynaga-Pena C.G."/>
            <person name="Snetselaar K."/>
            <person name="McCann M."/>
            <person name="Perez-Martin J."/>
            <person name="Feldbruegge M."/>
            <person name="Basse C.W."/>
            <person name="Steinberg G."/>
            <person name="Ibeas J.I."/>
            <person name="Holloman W."/>
            <person name="Guzman P."/>
            <person name="Farman M.L."/>
            <person name="Stajich J.E."/>
            <person name="Sentandreu R."/>
            <person name="Gonzalez-Prieto J.M."/>
            <person name="Kennell J.C."/>
            <person name="Molina L."/>
            <person name="Schirawski J."/>
            <person name="Mendoza-Mendoza A."/>
            <person name="Greilinger D."/>
            <person name="Muench K."/>
            <person name="Roessel N."/>
            <person name="Scherer M."/>
            <person name="Vranes M."/>
            <person name="Ladendorf O."/>
            <person name="Vincon V."/>
            <person name="Fuchs U."/>
            <person name="Sandrock B."/>
            <person name="Meng S."/>
            <person name="Ho E.C.H."/>
            <person name="Cahill M.J."/>
            <person name="Boyce K.J."/>
            <person name="Klose J."/>
            <person name="Klosterman S.J."/>
            <person name="Deelstra H.J."/>
            <person name="Ortiz-Castellanos L."/>
            <person name="Li W."/>
            <person name="Sanchez-Alonso P."/>
            <person name="Schreier P.H."/>
            <person name="Haeuser-Hahn I."/>
            <person name="Vaupel M."/>
            <person name="Koopmann E."/>
            <person name="Friedrich G."/>
            <person name="Voss H."/>
            <person name="Schlueter T."/>
            <person name="Margolis J."/>
            <person name="Platt D."/>
            <person name="Swimmer C."/>
            <person name="Gnirke A."/>
            <person name="Chen F."/>
            <person name="Vysotskaia V."/>
            <person name="Mannhaupt G."/>
            <person name="Gueldener U."/>
            <person name="Muensterkoetter M."/>
            <person name="Haase D."/>
            <person name="Oesterheld M."/>
            <person name="Mewes H.-W."/>
            <person name="Mauceli E.W."/>
            <person name="DeCaprio D."/>
            <person name="Wade C.M."/>
            <person name="Butler J."/>
            <person name="Young S.K."/>
            <person name="Jaffe D.B."/>
            <person name="Calvo S.E."/>
            <person name="Nusbaum C."/>
            <person name="Galagan J.E."/>
            <person name="Birren B.W."/>
        </authorList>
    </citation>
    <scope>NUCLEOTIDE SEQUENCE [LARGE SCALE GENOMIC DNA]</scope>
    <source>
        <strain>DSM 14603 / FGSC 9021 / UM521</strain>
    </source>
</reference>
<reference key="3">
    <citation type="submission" date="2014-09" db="EMBL/GenBank/DDBJ databases">
        <authorList>
            <person name="Gueldener U."/>
            <person name="Muensterkoetter M."/>
            <person name="Walter M.C."/>
            <person name="Mannhaupt G."/>
            <person name="Kahmann R."/>
        </authorList>
    </citation>
    <scope>GENOME REANNOTATION</scope>
    <source>
        <strain>DSM 14603 / FGSC 9021 / UM521</strain>
    </source>
</reference>